<keyword id="KW-0963">Cytoplasm</keyword>
<keyword id="KW-1185">Reference proteome</keyword>
<keyword id="KW-0808">Transferase</keyword>
<keyword id="KW-0819">tRNA processing</keyword>
<organism>
    <name type="scientific">Shigella flexneri</name>
    <dbReference type="NCBI Taxonomy" id="623"/>
    <lineage>
        <taxon>Bacteria</taxon>
        <taxon>Pseudomonadati</taxon>
        <taxon>Pseudomonadota</taxon>
        <taxon>Gammaproteobacteria</taxon>
        <taxon>Enterobacterales</taxon>
        <taxon>Enterobacteriaceae</taxon>
        <taxon>Shigella</taxon>
    </lineage>
</organism>
<proteinExistence type="inferred from homology"/>
<feature type="chain" id="PRO_0000168790" description="Sulfurtransferase TusE">
    <location>
        <begin position="1"/>
        <end position="109"/>
    </location>
</feature>
<feature type="active site" description="Cysteine persulfide intermediate" evidence="1">
    <location>
        <position position="108"/>
    </location>
</feature>
<name>TUSE_SHIFL</name>
<gene>
    <name type="primary">tusE</name>
    <name type="ordered locus">SF0971</name>
    <name type="ordered locus">S1037</name>
</gene>
<evidence type="ECO:0000250" key="1"/>
<evidence type="ECO:0000305" key="2"/>
<sequence>MLIFEGKEIETDTEGYLKESSQWSEPLAVVIAENEGISLSPEHWEVVRFVRDFYLEFNTSPAIRMLVKAMANKFGEEKGNSRYLYRLFPKGPAKQATKIAGLPKPVKCI</sequence>
<accession>P0AB19</accession>
<accession>P45572</accession>
<accession>P75878</accession>
<reference key="1">
    <citation type="journal article" date="2002" name="Nucleic Acids Res.">
        <title>Genome sequence of Shigella flexneri 2a: insights into pathogenicity through comparison with genomes of Escherichia coli K12 and O157.</title>
        <authorList>
            <person name="Jin Q."/>
            <person name="Yuan Z."/>
            <person name="Xu J."/>
            <person name="Wang Y."/>
            <person name="Shen Y."/>
            <person name="Lu W."/>
            <person name="Wang J."/>
            <person name="Liu H."/>
            <person name="Yang J."/>
            <person name="Yang F."/>
            <person name="Zhang X."/>
            <person name="Zhang J."/>
            <person name="Yang G."/>
            <person name="Wu H."/>
            <person name="Qu D."/>
            <person name="Dong J."/>
            <person name="Sun L."/>
            <person name="Xue Y."/>
            <person name="Zhao A."/>
            <person name="Gao Y."/>
            <person name="Zhu J."/>
            <person name="Kan B."/>
            <person name="Ding K."/>
            <person name="Chen S."/>
            <person name="Cheng H."/>
            <person name="Yao Z."/>
            <person name="He B."/>
            <person name="Chen R."/>
            <person name="Ma D."/>
            <person name="Qiang B."/>
            <person name="Wen Y."/>
            <person name="Hou Y."/>
            <person name="Yu J."/>
        </authorList>
    </citation>
    <scope>NUCLEOTIDE SEQUENCE [LARGE SCALE GENOMIC DNA]</scope>
    <source>
        <strain>301 / Serotype 2a</strain>
    </source>
</reference>
<reference key="2">
    <citation type="journal article" date="2003" name="Infect. Immun.">
        <title>Complete genome sequence and comparative genomics of Shigella flexneri serotype 2a strain 2457T.</title>
        <authorList>
            <person name="Wei J."/>
            <person name="Goldberg M.B."/>
            <person name="Burland V."/>
            <person name="Venkatesan M.M."/>
            <person name="Deng W."/>
            <person name="Fournier G."/>
            <person name="Mayhew G.F."/>
            <person name="Plunkett G. III"/>
            <person name="Rose D.J."/>
            <person name="Darling A."/>
            <person name="Mau B."/>
            <person name="Perna N.T."/>
            <person name="Payne S.M."/>
            <person name="Runyen-Janecky L.J."/>
            <person name="Zhou S."/>
            <person name="Schwartz D.C."/>
            <person name="Blattner F.R."/>
        </authorList>
    </citation>
    <scope>NUCLEOTIDE SEQUENCE [LARGE SCALE GENOMIC DNA]</scope>
    <source>
        <strain>ATCC 700930 / 2457T / Serotype 2a</strain>
    </source>
</reference>
<comment type="function">
    <text evidence="1">Part of a sulfur-relay system required for 2-thiolation of 5-methylaminomethyl-2-thiouridine (mnm(5)s(2)U) at tRNA wobble positions. Could accept sulfur from TusD (By similarity).</text>
</comment>
<comment type="subunit">
    <text evidence="1">Interacts with the TusBCD complex. Interacts with MnmA (By similarity).</text>
</comment>
<comment type="subcellular location">
    <subcellularLocation>
        <location evidence="1">Cytoplasm</location>
    </subcellularLocation>
</comment>
<comment type="similarity">
    <text evidence="2">Belongs to the DsrC/TusE family.</text>
</comment>
<comment type="sequence caution" evidence="2">
    <conflict type="erroneous initiation">
        <sequence resource="EMBL-CDS" id="AAN42599"/>
    </conflict>
</comment>
<comment type="sequence caution" evidence="2">
    <conflict type="erroneous initiation">
        <sequence resource="EMBL-CDS" id="AAP16485"/>
    </conflict>
</comment>
<dbReference type="EC" id="2.8.1.-"/>
<dbReference type="EMBL" id="AE005674">
    <property type="protein sequence ID" value="AAN42599.1"/>
    <property type="status" value="ALT_INIT"/>
    <property type="molecule type" value="Genomic_DNA"/>
</dbReference>
<dbReference type="EMBL" id="AE014073">
    <property type="protein sequence ID" value="AAP16485.1"/>
    <property type="status" value="ALT_INIT"/>
    <property type="molecule type" value="Genomic_DNA"/>
</dbReference>
<dbReference type="RefSeq" id="WP_000904442.1">
    <property type="nucleotide sequence ID" value="NZ_WPGW01000043.1"/>
</dbReference>
<dbReference type="SMR" id="P0AB19"/>
<dbReference type="STRING" id="198214.SF0971"/>
<dbReference type="PaxDb" id="198214-SF0971"/>
<dbReference type="GeneID" id="93776445"/>
<dbReference type="KEGG" id="sfl:SF0971"/>
<dbReference type="KEGG" id="sfx:S1037"/>
<dbReference type="PATRIC" id="fig|198214.7.peg.1130"/>
<dbReference type="HOGENOM" id="CLU_153199_0_0_6"/>
<dbReference type="Proteomes" id="UP000001006">
    <property type="component" value="Chromosome"/>
</dbReference>
<dbReference type="Proteomes" id="UP000002673">
    <property type="component" value="Chromosome"/>
</dbReference>
<dbReference type="GO" id="GO:0005737">
    <property type="term" value="C:cytoplasm"/>
    <property type="evidence" value="ECO:0007669"/>
    <property type="project" value="UniProtKB-SubCell"/>
</dbReference>
<dbReference type="GO" id="GO:0097163">
    <property type="term" value="F:sulfur carrier activity"/>
    <property type="evidence" value="ECO:0007669"/>
    <property type="project" value="TreeGrafter"/>
</dbReference>
<dbReference type="GO" id="GO:0016740">
    <property type="term" value="F:transferase activity"/>
    <property type="evidence" value="ECO:0007669"/>
    <property type="project" value="UniProtKB-KW"/>
</dbReference>
<dbReference type="GO" id="GO:0002143">
    <property type="term" value="P:tRNA wobble position uridine thiolation"/>
    <property type="evidence" value="ECO:0007669"/>
    <property type="project" value="TreeGrafter"/>
</dbReference>
<dbReference type="FunFam" id="1.10.10.370:FF:000001">
    <property type="entry name" value="Sulfurtransferase"/>
    <property type="match status" value="1"/>
</dbReference>
<dbReference type="FunFam" id="3.30.1420.10:FF:000001">
    <property type="entry name" value="Sulfurtransferase"/>
    <property type="match status" value="1"/>
</dbReference>
<dbReference type="Gene3D" id="3.30.1420.10">
    <property type="match status" value="1"/>
</dbReference>
<dbReference type="Gene3D" id="1.10.10.370">
    <property type="entry name" value="DsrC-like protein, C-terminal domain"/>
    <property type="match status" value="1"/>
</dbReference>
<dbReference type="InterPro" id="IPR042072">
    <property type="entry name" value="DsrC-like_C"/>
</dbReference>
<dbReference type="InterPro" id="IPR025526">
    <property type="entry name" value="DsrC-like_dom_sf"/>
</dbReference>
<dbReference type="InterPro" id="IPR043163">
    <property type="entry name" value="DsrC-like_N"/>
</dbReference>
<dbReference type="InterPro" id="IPR007453">
    <property type="entry name" value="DsrC/TusE"/>
</dbReference>
<dbReference type="NCBIfam" id="TIGR03342">
    <property type="entry name" value="dsrC_tusE_dsvC"/>
    <property type="match status" value="1"/>
</dbReference>
<dbReference type="NCBIfam" id="NF008562">
    <property type="entry name" value="PRK11508.1"/>
    <property type="match status" value="1"/>
</dbReference>
<dbReference type="PANTHER" id="PTHR37010">
    <property type="entry name" value="SULFURTRANSFERASE TUSE"/>
    <property type="match status" value="1"/>
</dbReference>
<dbReference type="PANTHER" id="PTHR37010:SF1">
    <property type="entry name" value="SULFURTRANSFERASE TUSE"/>
    <property type="match status" value="1"/>
</dbReference>
<dbReference type="Pfam" id="PF04358">
    <property type="entry name" value="DsrC"/>
    <property type="match status" value="1"/>
</dbReference>
<dbReference type="PIRSF" id="PIRSF006223">
    <property type="entry name" value="DsrC_TusE"/>
    <property type="match status" value="1"/>
</dbReference>
<dbReference type="SUPFAM" id="SSF69721">
    <property type="entry name" value="DsrC, the gamma subunit of dissimilatory sulfite reductase"/>
    <property type="match status" value="1"/>
</dbReference>
<protein>
    <recommendedName>
        <fullName>Sulfurtransferase TusE</fullName>
        <ecNumber>2.8.1.-</ecNumber>
    </recommendedName>
    <alternativeName>
        <fullName>tRNA 2-thiouridine synthesizing protein E</fullName>
    </alternativeName>
</protein>